<evidence type="ECO:0000256" key="1">
    <source>
        <dbReference type="SAM" id="MobiDB-lite"/>
    </source>
</evidence>
<evidence type="ECO:0000305" key="2"/>
<keyword id="KW-0687">Ribonucleoprotein</keyword>
<keyword id="KW-0689">Ribosomal protein</keyword>
<name>RL27A_EUPCR</name>
<gene>
    <name type="primary">RPL27A</name>
    <name type="synonym">RPL29</name>
</gene>
<dbReference type="EMBL" id="U13207">
    <property type="protein sequence ID" value="AAA73459.1"/>
    <property type="molecule type" value="Genomic_DNA"/>
</dbReference>
<dbReference type="SMR" id="P48161"/>
<dbReference type="GO" id="GO:0022625">
    <property type="term" value="C:cytosolic large ribosomal subunit"/>
    <property type="evidence" value="ECO:0007669"/>
    <property type="project" value="TreeGrafter"/>
</dbReference>
<dbReference type="GO" id="GO:0003735">
    <property type="term" value="F:structural constituent of ribosome"/>
    <property type="evidence" value="ECO:0007669"/>
    <property type="project" value="InterPro"/>
</dbReference>
<dbReference type="GO" id="GO:0006412">
    <property type="term" value="P:translation"/>
    <property type="evidence" value="ECO:0007669"/>
    <property type="project" value="InterPro"/>
</dbReference>
<dbReference type="FunFam" id="3.100.10.10:FF:000002">
    <property type="entry name" value="60S ribosomal protein L27a"/>
    <property type="match status" value="1"/>
</dbReference>
<dbReference type="Gene3D" id="3.100.10.10">
    <property type="match status" value="1"/>
</dbReference>
<dbReference type="HAMAP" id="MF_01341">
    <property type="entry name" value="Ribosomal_uL15"/>
    <property type="match status" value="1"/>
</dbReference>
<dbReference type="InterPro" id="IPR030878">
    <property type="entry name" value="Ribosomal_uL15"/>
</dbReference>
<dbReference type="InterPro" id="IPR021131">
    <property type="entry name" value="Ribosomal_uL15/eL18"/>
</dbReference>
<dbReference type="InterPro" id="IPR036227">
    <property type="entry name" value="Ribosomal_uL15/eL18_sf"/>
</dbReference>
<dbReference type="InterPro" id="IPR001196">
    <property type="entry name" value="Ribosomal_uL15_CS"/>
</dbReference>
<dbReference type="PANTHER" id="PTHR11721">
    <property type="entry name" value="60S RIBOSOMAL PROTEIN L27A"/>
    <property type="match status" value="1"/>
</dbReference>
<dbReference type="PANTHER" id="PTHR11721:SF3">
    <property type="entry name" value="LARGE RIBOSOMAL SUBUNIT PROTEIN UL15"/>
    <property type="match status" value="1"/>
</dbReference>
<dbReference type="Pfam" id="PF00828">
    <property type="entry name" value="Ribosomal_L27A"/>
    <property type="match status" value="1"/>
</dbReference>
<dbReference type="SUPFAM" id="SSF52080">
    <property type="entry name" value="Ribosomal proteins L15p and L18e"/>
    <property type="match status" value="1"/>
</dbReference>
<dbReference type="PROSITE" id="PS00475">
    <property type="entry name" value="RIBOSOMAL_L15"/>
    <property type="match status" value="1"/>
</dbReference>
<sequence>MTHSKRNTRKLRGHVSHGHGRVGKHRKHPGGRGMAGPEHHHRINVFKYHPGHIGKHGMRHFHLMRNQYYCPSINLSKLWSLVTEEERQKAQTDKSKVILIDVVKHGYYKVLGKGLLPEVPLVVKAKLFTPTAEKRIKQVGGACVLRAQ</sequence>
<feature type="chain" id="PRO_0000104894" description="Large ribosomal subunit protein uL15">
    <location>
        <begin position="1"/>
        <end position="148"/>
    </location>
</feature>
<feature type="region of interest" description="Disordered" evidence="1">
    <location>
        <begin position="1"/>
        <end position="38"/>
    </location>
</feature>
<feature type="compositionally biased region" description="Basic residues" evidence="1">
    <location>
        <begin position="1"/>
        <end position="30"/>
    </location>
</feature>
<reference key="1">
    <citation type="journal article" date="1994" name="Gene">
        <title>Sequence of the macronuclear DNA encoding large subunit ribosomal protein 29 (L29) in Euplotes crassus and cycloheximide sensitivity.</title>
        <authorList>
            <person name="Jahn C.L."/>
            <person name="Erbeznik M."/>
            <person name="Jaraczewski J.W."/>
            <person name="Melek M."/>
            <person name="Shippen D.E."/>
        </authorList>
    </citation>
    <scope>NUCLEOTIDE SEQUENCE [GENOMIC DNA]</scope>
</reference>
<accession>P48161</accession>
<organism>
    <name type="scientific">Euplotes crassus</name>
    <dbReference type="NCBI Taxonomy" id="5936"/>
    <lineage>
        <taxon>Eukaryota</taxon>
        <taxon>Sar</taxon>
        <taxon>Alveolata</taxon>
        <taxon>Ciliophora</taxon>
        <taxon>Intramacronucleata</taxon>
        <taxon>Spirotrichea</taxon>
        <taxon>Hypotrichia</taxon>
        <taxon>Euplotida</taxon>
        <taxon>Euplotidae</taxon>
        <taxon>Moneuplotes</taxon>
    </lineage>
</organism>
<comment type="similarity">
    <text evidence="2">Belongs to the universal ribosomal protein uL15 family.</text>
</comment>
<proteinExistence type="inferred from homology"/>
<protein>
    <recommendedName>
        <fullName evidence="2">Large ribosomal subunit protein uL15</fullName>
    </recommendedName>
    <alternativeName>
        <fullName>60S ribosomal protein L27a</fullName>
    </alternativeName>
    <alternativeName>
        <fullName>L29</fullName>
    </alternativeName>
</protein>